<reference key="1">
    <citation type="submission" date="2005-10" db="EMBL/GenBank/DDBJ databases">
        <title>Complete sequence of Pelobacter carbinolicus DSM 2380.</title>
        <authorList>
            <person name="Copeland A."/>
            <person name="Lucas S."/>
            <person name="Lapidus A."/>
            <person name="Barry K."/>
            <person name="Detter J.C."/>
            <person name="Glavina T."/>
            <person name="Hammon N."/>
            <person name="Israni S."/>
            <person name="Pitluck S."/>
            <person name="Chertkov O."/>
            <person name="Schmutz J."/>
            <person name="Larimer F."/>
            <person name="Land M."/>
            <person name="Kyrpides N."/>
            <person name="Ivanova N."/>
            <person name="Richardson P."/>
        </authorList>
    </citation>
    <scope>NUCLEOTIDE SEQUENCE [LARGE SCALE GENOMIC DNA]</scope>
    <source>
        <strain>DSM 2380 / NBRC 103641 / GraBd1</strain>
    </source>
</reference>
<dbReference type="EMBL" id="CP000142">
    <property type="protein sequence ID" value="ABA89450.1"/>
    <property type="molecule type" value="Genomic_DNA"/>
</dbReference>
<dbReference type="RefSeq" id="WP_011341965.1">
    <property type="nucleotide sequence ID" value="NC_007498.2"/>
</dbReference>
<dbReference type="SMR" id="Q3A2F7"/>
<dbReference type="STRING" id="338963.Pcar_2211"/>
<dbReference type="KEGG" id="pca:Pcar_2211"/>
<dbReference type="eggNOG" id="COG2001">
    <property type="taxonomic scope" value="Bacteria"/>
</dbReference>
<dbReference type="HOGENOM" id="CLU_107907_0_5_7"/>
<dbReference type="OrthoDB" id="9807753at2"/>
<dbReference type="Proteomes" id="UP000002534">
    <property type="component" value="Chromosome"/>
</dbReference>
<dbReference type="GO" id="GO:0005737">
    <property type="term" value="C:cytoplasm"/>
    <property type="evidence" value="ECO:0007669"/>
    <property type="project" value="UniProtKB-UniRule"/>
</dbReference>
<dbReference type="GO" id="GO:0009295">
    <property type="term" value="C:nucleoid"/>
    <property type="evidence" value="ECO:0007669"/>
    <property type="project" value="UniProtKB-SubCell"/>
</dbReference>
<dbReference type="GO" id="GO:0003700">
    <property type="term" value="F:DNA-binding transcription factor activity"/>
    <property type="evidence" value="ECO:0007669"/>
    <property type="project" value="UniProtKB-UniRule"/>
</dbReference>
<dbReference type="GO" id="GO:0000976">
    <property type="term" value="F:transcription cis-regulatory region binding"/>
    <property type="evidence" value="ECO:0007669"/>
    <property type="project" value="TreeGrafter"/>
</dbReference>
<dbReference type="GO" id="GO:2000143">
    <property type="term" value="P:negative regulation of DNA-templated transcription initiation"/>
    <property type="evidence" value="ECO:0007669"/>
    <property type="project" value="TreeGrafter"/>
</dbReference>
<dbReference type="CDD" id="cd16321">
    <property type="entry name" value="MraZ_C"/>
    <property type="match status" value="1"/>
</dbReference>
<dbReference type="CDD" id="cd16320">
    <property type="entry name" value="MraZ_N"/>
    <property type="match status" value="1"/>
</dbReference>
<dbReference type="Gene3D" id="3.40.1550.20">
    <property type="entry name" value="Transcriptional regulator MraZ domain"/>
    <property type="match status" value="1"/>
</dbReference>
<dbReference type="HAMAP" id="MF_01008">
    <property type="entry name" value="MraZ"/>
    <property type="match status" value="1"/>
</dbReference>
<dbReference type="InterPro" id="IPR003444">
    <property type="entry name" value="MraZ"/>
</dbReference>
<dbReference type="InterPro" id="IPR035644">
    <property type="entry name" value="MraZ_C"/>
</dbReference>
<dbReference type="InterPro" id="IPR020603">
    <property type="entry name" value="MraZ_dom"/>
</dbReference>
<dbReference type="InterPro" id="IPR035642">
    <property type="entry name" value="MraZ_N"/>
</dbReference>
<dbReference type="InterPro" id="IPR038619">
    <property type="entry name" value="MraZ_sf"/>
</dbReference>
<dbReference type="InterPro" id="IPR007159">
    <property type="entry name" value="SpoVT-AbrB_dom"/>
</dbReference>
<dbReference type="InterPro" id="IPR037914">
    <property type="entry name" value="SpoVT-AbrB_sf"/>
</dbReference>
<dbReference type="PANTHER" id="PTHR34701">
    <property type="entry name" value="TRANSCRIPTIONAL REGULATOR MRAZ"/>
    <property type="match status" value="1"/>
</dbReference>
<dbReference type="PANTHER" id="PTHR34701:SF1">
    <property type="entry name" value="TRANSCRIPTIONAL REGULATOR MRAZ"/>
    <property type="match status" value="1"/>
</dbReference>
<dbReference type="Pfam" id="PF02381">
    <property type="entry name" value="MraZ"/>
    <property type="match status" value="2"/>
</dbReference>
<dbReference type="SUPFAM" id="SSF89447">
    <property type="entry name" value="AbrB/MazE/MraZ-like"/>
    <property type="match status" value="1"/>
</dbReference>
<dbReference type="PROSITE" id="PS51740">
    <property type="entry name" value="SPOVT_ABRB"/>
    <property type="match status" value="2"/>
</dbReference>
<sequence length="150" mass="17073">MRFKGEFFNAIDAKGRASIPAKFRETLSSVYGDERLIVTQSDGGLAAYPYQEWHKMLERVEALPSNDLKEAINLAIISPAVECSFDKQGRIQLPKAQRCYAGLESEIREIVVVGAIDKIMIWNRTKHIERREQAEAFLRAQSQELKNLGF</sequence>
<proteinExistence type="inferred from homology"/>
<feature type="chain" id="PRO_0000230097" description="Transcriptional regulator MraZ">
    <location>
        <begin position="1"/>
        <end position="150"/>
    </location>
</feature>
<feature type="domain" description="SpoVT-AbrB 1" evidence="2">
    <location>
        <begin position="6"/>
        <end position="52"/>
    </location>
</feature>
<feature type="domain" description="SpoVT-AbrB 2" evidence="2">
    <location>
        <begin position="80"/>
        <end position="126"/>
    </location>
</feature>
<protein>
    <recommendedName>
        <fullName>Transcriptional regulator MraZ</fullName>
    </recommendedName>
</protein>
<gene>
    <name evidence="1" type="primary">mraZ</name>
    <name type="ordered locus">Pcar_2211</name>
</gene>
<organism>
    <name type="scientific">Syntrophotalea carbinolica (strain DSM 2380 / NBRC 103641 / GraBd1)</name>
    <name type="common">Pelobacter carbinolicus</name>
    <dbReference type="NCBI Taxonomy" id="338963"/>
    <lineage>
        <taxon>Bacteria</taxon>
        <taxon>Pseudomonadati</taxon>
        <taxon>Thermodesulfobacteriota</taxon>
        <taxon>Desulfuromonadia</taxon>
        <taxon>Desulfuromonadales</taxon>
        <taxon>Syntrophotaleaceae</taxon>
        <taxon>Syntrophotalea</taxon>
    </lineage>
</organism>
<comment type="subunit">
    <text evidence="1">Forms oligomers.</text>
</comment>
<comment type="subcellular location">
    <subcellularLocation>
        <location evidence="1">Cytoplasm</location>
        <location evidence="1">Nucleoid</location>
    </subcellularLocation>
</comment>
<comment type="similarity">
    <text evidence="1">Belongs to the MraZ family.</text>
</comment>
<accession>Q3A2F7</accession>
<evidence type="ECO:0000255" key="1">
    <source>
        <dbReference type="HAMAP-Rule" id="MF_01008"/>
    </source>
</evidence>
<evidence type="ECO:0000255" key="2">
    <source>
        <dbReference type="PROSITE-ProRule" id="PRU01076"/>
    </source>
</evidence>
<keyword id="KW-0963">Cytoplasm</keyword>
<keyword id="KW-0238">DNA-binding</keyword>
<keyword id="KW-1185">Reference proteome</keyword>
<keyword id="KW-0677">Repeat</keyword>
<keyword id="KW-0804">Transcription</keyword>
<keyword id="KW-0805">Transcription regulation</keyword>
<name>MRAZ_SYNC1</name>